<evidence type="ECO:0000250" key="1"/>
<evidence type="ECO:0000269" key="2">
    <source>
    </source>
</evidence>
<evidence type="ECO:0000269" key="3">
    <source>
    </source>
</evidence>
<evidence type="ECO:0000305" key="4"/>
<evidence type="ECO:0007829" key="5">
    <source>
        <dbReference type="PDB" id="5K8M"/>
    </source>
</evidence>
<evidence type="ECO:0007829" key="6">
    <source>
        <dbReference type="PDB" id="5K8N"/>
    </source>
</evidence>
<evidence type="ECO:0007829" key="7">
    <source>
        <dbReference type="PDB" id="5K8P"/>
    </source>
</evidence>
<accession>D3WZ85</accession>
<comment type="function">
    <text evidence="2 3">Catalyzes the deamination of 5-nitroanthranilate (5NAA) to 5-nitrosalicylate (5NSA), the first step in biodegradation of 5-nitroanthranilate.</text>
</comment>
<comment type="catalytic activity">
    <reaction evidence="3">
        <text>5-nitroanthranilate + H2O + H(+) = 5-nitrosalicylate + NH4(+)</text>
        <dbReference type="Rhea" id="RHEA:28166"/>
        <dbReference type="ChEBI" id="CHEBI:15377"/>
        <dbReference type="ChEBI" id="CHEBI:15378"/>
        <dbReference type="ChEBI" id="CHEBI:28938"/>
        <dbReference type="ChEBI" id="CHEBI:61267"/>
        <dbReference type="ChEBI" id="CHEBI:61268"/>
        <dbReference type="EC" id="3.5.99.8"/>
    </reaction>
</comment>
<comment type="cofactor">
    <cofactor evidence="3">
        <name>Co(2+)</name>
        <dbReference type="ChEBI" id="CHEBI:48828"/>
    </cofactor>
    <cofactor evidence="3">
        <name>Mn(2+)</name>
        <dbReference type="ChEBI" id="CHEBI:29035"/>
    </cofactor>
    <cofactor evidence="3">
        <name>Zn(2+)</name>
        <dbReference type="ChEBI" id="CHEBI:29105"/>
    </cofactor>
    <cofactor evidence="3">
        <name>Fe(2+)</name>
        <dbReference type="ChEBI" id="CHEBI:29033"/>
    </cofactor>
    <cofactor evidence="3">
        <name>Ni(2+)</name>
        <dbReference type="ChEBI" id="CHEBI:49786"/>
    </cofactor>
    <text evidence="3">Divalent metal cations. Co(2+), Mn(2+), Zn(2+), Fe(2+) or Ni(2+).</text>
</comment>
<comment type="biophysicochemical properties">
    <kinetics>
        <KM evidence="3">335.1 uM for 5-nitroanthranilate</KM>
        <Vmax evidence="3">181.5 nmol/min/mg enzyme</Vmax>
    </kinetics>
    <phDependence>
        <text evidence="3">Optimum pH is 7.2.</text>
    </phDependence>
    <temperatureDependence>
        <text evidence="3">Optimum temperature is degrees Celsius.</text>
    </temperatureDependence>
</comment>
<comment type="similarity">
    <text evidence="4">Belongs to the peptidase M20A family.</text>
</comment>
<proteinExistence type="evidence at protein level"/>
<dbReference type="EC" id="3.5.99.8"/>
<dbReference type="EMBL" id="GU188569">
    <property type="protein sequence ID" value="ADC93716.1"/>
    <property type="molecule type" value="Genomic_DNA"/>
</dbReference>
<dbReference type="PDB" id="5K8M">
    <property type="method" value="X-ray"/>
    <property type="resolution" value="2.75 A"/>
    <property type="chains" value="A/B/C/D=1-425"/>
</dbReference>
<dbReference type="PDB" id="5K8N">
    <property type="method" value="X-ray"/>
    <property type="resolution" value="3.23 A"/>
    <property type="chains" value="A/B/C/D/E/F/G/H=1-425"/>
</dbReference>
<dbReference type="PDB" id="5K8O">
    <property type="method" value="X-ray"/>
    <property type="resolution" value="2.89 A"/>
    <property type="chains" value="A/B/C/D/E/F/G/H=1-425"/>
</dbReference>
<dbReference type="PDB" id="5K8P">
    <property type="method" value="X-ray"/>
    <property type="resolution" value="2.20 A"/>
    <property type="chains" value="A/B/C/D/E/F/G/H=1-425"/>
</dbReference>
<dbReference type="PDBsum" id="5K8M"/>
<dbReference type="PDBsum" id="5K8N"/>
<dbReference type="PDBsum" id="5K8O"/>
<dbReference type="PDBsum" id="5K8P"/>
<dbReference type="SMR" id="D3WZ85"/>
<dbReference type="KEGG" id="ag:ADC93716"/>
<dbReference type="BioCyc" id="MetaCyc:MONOMER-15902"/>
<dbReference type="BRENDA" id="3.5.99.8">
    <property type="organism ID" value="930"/>
</dbReference>
<dbReference type="GO" id="GO:0016787">
    <property type="term" value="F:hydrolase activity"/>
    <property type="evidence" value="ECO:0007669"/>
    <property type="project" value="UniProtKB-KW"/>
</dbReference>
<dbReference type="GO" id="GO:0046872">
    <property type="term" value="F:metal ion binding"/>
    <property type="evidence" value="ECO:0007669"/>
    <property type="project" value="UniProtKB-KW"/>
</dbReference>
<dbReference type="CDD" id="cd03896">
    <property type="entry name" value="M20_PAAh_like"/>
    <property type="match status" value="1"/>
</dbReference>
<dbReference type="Gene3D" id="3.40.630.10">
    <property type="entry name" value="Zn peptidases"/>
    <property type="match status" value="2"/>
</dbReference>
<dbReference type="InterPro" id="IPR002933">
    <property type="entry name" value="Peptidase_M20"/>
</dbReference>
<dbReference type="InterPro" id="IPR011650">
    <property type="entry name" value="Peptidase_M20_dimer"/>
</dbReference>
<dbReference type="InterPro" id="IPR050072">
    <property type="entry name" value="Peptidase_M20A"/>
</dbReference>
<dbReference type="PANTHER" id="PTHR43808">
    <property type="entry name" value="ACETYLORNITHINE DEACETYLASE"/>
    <property type="match status" value="1"/>
</dbReference>
<dbReference type="Pfam" id="PF07687">
    <property type="entry name" value="M20_dimer"/>
    <property type="match status" value="1"/>
</dbReference>
<dbReference type="Pfam" id="PF01546">
    <property type="entry name" value="Peptidase_M20"/>
    <property type="match status" value="1"/>
</dbReference>
<dbReference type="SUPFAM" id="SSF53187">
    <property type="entry name" value="Zn-dependent exopeptidases"/>
    <property type="match status" value="1"/>
</dbReference>
<name>NAAA_BRASZ</name>
<protein>
    <recommendedName>
        <fullName>5-nitroanthranilic acid aminohydrolase</fullName>
        <ecNumber>3.5.99.8</ecNumber>
    </recommendedName>
    <alternativeName>
        <fullName>5-nitroanthranilic acid degradation protein A</fullName>
    </alternativeName>
    <alternativeName>
        <fullName>5NAA deaminase</fullName>
    </alternativeName>
</protein>
<gene>
    <name type="primary">naaA</name>
</gene>
<organism>
    <name type="scientific">Bradyrhizobium sp</name>
    <dbReference type="NCBI Taxonomy" id="376"/>
    <lineage>
        <taxon>Bacteria</taxon>
        <taxon>Pseudomonadati</taxon>
        <taxon>Pseudomonadota</taxon>
        <taxon>Alphaproteobacteria</taxon>
        <taxon>Hyphomicrobiales</taxon>
        <taxon>Nitrobacteraceae</taxon>
        <taxon>Bradyrhizobium</taxon>
    </lineage>
</organism>
<reference key="1">
    <citation type="journal article" date="2010" name="Appl. Environ. Microbiol.">
        <title>Biodegradation of 5-Nitroanthranilic Acid by Bradyrhizobium sp. Strain JS329.</title>
        <authorList>
            <person name="Qu Y."/>
            <person name="Spain J.C."/>
        </authorList>
    </citation>
    <scope>NUCLEOTIDE SEQUENCE [GENOMIC DNA]</scope>
    <scope>FUNCTION</scope>
    <source>
        <strain>JS329</strain>
    </source>
</reference>
<reference key="2">
    <citation type="journal article" date="2011" name="J. Bacteriol.">
        <title>Molecular and biochemical characterization of the 5-nitroanthranilic acid degradation pathway in Bradyrhizobium sp. strain JS329.</title>
        <authorList>
            <person name="Qu Y."/>
            <person name="Spain J.C."/>
        </authorList>
    </citation>
    <scope>FUNCTION</scope>
    <scope>CATALYTIC ACTIVITY</scope>
    <scope>COFACTOR</scope>
    <scope>BIOPHYSICOCHEMICAL PROPERTIES</scope>
    <source>
        <strain>JS329</strain>
    </source>
</reference>
<feature type="chain" id="PRO_0000418738" description="5-nitroanthranilic acid aminohydrolase">
    <location>
        <begin position="1"/>
        <end position="425"/>
    </location>
</feature>
<feature type="active site" evidence="1">
    <location>
        <position position="88"/>
    </location>
</feature>
<feature type="active site" description="Proton acceptor" evidence="1">
    <location>
        <position position="158"/>
    </location>
</feature>
<feature type="helix" evidence="7">
    <location>
        <begin position="6"/>
        <end position="15"/>
    </location>
</feature>
<feature type="helix" evidence="7">
    <location>
        <begin position="18"/>
        <end position="30"/>
    </location>
</feature>
<feature type="helix" evidence="7">
    <location>
        <begin position="39"/>
        <end position="51"/>
    </location>
</feature>
<feature type="strand" evidence="7">
    <location>
        <begin position="57"/>
        <end position="62"/>
    </location>
</feature>
<feature type="strand" evidence="7">
    <location>
        <begin position="65"/>
        <end position="72"/>
    </location>
</feature>
<feature type="strand" evidence="7">
    <location>
        <begin position="75"/>
        <end position="78"/>
    </location>
</feature>
<feature type="strand" evidence="7">
    <location>
        <begin position="81"/>
        <end position="87"/>
    </location>
</feature>
<feature type="helix" evidence="7">
    <location>
        <begin position="95"/>
        <end position="97"/>
    </location>
</feature>
<feature type="turn" evidence="7">
    <location>
        <begin position="100"/>
        <end position="103"/>
    </location>
</feature>
<feature type="helix" evidence="7">
    <location>
        <begin position="105"/>
        <end position="108"/>
    </location>
</feature>
<feature type="strand" evidence="5">
    <location>
        <begin position="111"/>
        <end position="113"/>
    </location>
</feature>
<feature type="strand" evidence="7">
    <location>
        <begin position="114"/>
        <end position="118"/>
    </location>
</feature>
<feature type="helix" evidence="7">
    <location>
        <begin position="120"/>
        <end position="123"/>
    </location>
</feature>
<feature type="helix" evidence="7">
    <location>
        <begin position="126"/>
        <end position="141"/>
    </location>
</feature>
<feature type="strand" evidence="7">
    <location>
        <begin position="150"/>
        <end position="156"/>
    </location>
</feature>
<feature type="turn" evidence="7">
    <location>
        <begin position="170"/>
        <end position="172"/>
    </location>
</feature>
<feature type="helix" evidence="7">
    <location>
        <begin position="175"/>
        <end position="177"/>
    </location>
</feature>
<feature type="helix" evidence="7">
    <location>
        <begin position="179"/>
        <end position="184"/>
    </location>
</feature>
<feature type="strand" evidence="7">
    <location>
        <begin position="190"/>
        <end position="194"/>
    </location>
</feature>
<feature type="strand" evidence="6">
    <location>
        <begin position="198"/>
        <end position="200"/>
    </location>
</feature>
<feature type="strand" evidence="7">
    <location>
        <begin position="208"/>
        <end position="217"/>
    </location>
</feature>
<feature type="helix" evidence="7">
    <location>
        <begin position="224"/>
        <end position="226"/>
    </location>
</feature>
<feature type="helix" evidence="7">
    <location>
        <begin position="233"/>
        <end position="235"/>
    </location>
</feature>
<feature type="helix" evidence="7">
    <location>
        <begin position="239"/>
        <end position="260"/>
    </location>
</feature>
<feature type="strand" evidence="7">
    <location>
        <begin position="263"/>
        <end position="265"/>
    </location>
</feature>
<feature type="strand" evidence="7">
    <location>
        <begin position="268"/>
        <end position="270"/>
    </location>
</feature>
<feature type="strand" evidence="7">
    <location>
        <begin position="274"/>
        <end position="283"/>
    </location>
</feature>
<feature type="strand" evidence="7">
    <location>
        <begin position="292"/>
        <end position="302"/>
    </location>
</feature>
<feature type="helix" evidence="7">
    <location>
        <begin position="308"/>
        <end position="321"/>
    </location>
</feature>
<feature type="strand" evidence="7">
    <location>
        <begin position="326"/>
        <end position="334"/>
    </location>
</feature>
<feature type="helix" evidence="7">
    <location>
        <begin position="343"/>
        <end position="357"/>
    </location>
</feature>
<feature type="helix" evidence="7">
    <location>
        <begin position="367"/>
        <end position="369"/>
    </location>
</feature>
<feature type="helix" evidence="7">
    <location>
        <begin position="375"/>
        <end position="380"/>
    </location>
</feature>
<feature type="strand" evidence="7">
    <location>
        <begin position="385"/>
        <end position="387"/>
    </location>
</feature>
<feature type="turn" evidence="7">
    <location>
        <begin position="394"/>
        <end position="397"/>
    </location>
</feature>
<feature type="strand" evidence="7">
    <location>
        <begin position="400"/>
        <end position="402"/>
    </location>
</feature>
<feature type="helix" evidence="7">
    <location>
        <begin position="403"/>
        <end position="420"/>
    </location>
</feature>
<sequence>MAGSNDVAKVMKTLDGMREGLIQTAVELGSIEAPTGREGAAGDYVYEWMARNGFGPERVGVFDDRFNVVGRLRGTGGGASLSFNSHLDTIMAREDTARFADANDRIYHEAWHEEGRIYGYSVVNCKGPMACWLIAAKALKEAGAALKGDVVLTAVCGEIDCEPVDEFQGHDYLAEDIGARYAISHGAISDYALVAEATNFKPAWVEAGKVFLKVTVFAGPSRYTPYVPRPVAALDSPNAIVRMAKLVEALEEWADNYEKRYTREYGGGTVVPKVAIGAIRGGVPYKIYRFPELCSIYMDIRLNPDTNPLVVQREVEAVVSKLGLKAEVKPFLFRRGYEAQGIEPLQNALEVAHREVVGRPTERPGSPECSMWRDTNPYNELGIPSLTYGCGGGAGGGNTYFLVDDMLKAAKVYAMTAMDLCNRTP</sequence>
<keyword id="KW-0002">3D-structure</keyword>
<keyword id="KW-0378">Hydrolase</keyword>
<keyword id="KW-0479">Metal-binding</keyword>